<sequence length="626" mass="70119">MAWSVADSRSLYGIRHWGAGYFDVGDSGNIVVRPNVRQRKEIDLYRLVRDLGGKGLDLPLLVRFPDILQDRVTRLCGAFDKAIAEQGYGNRYTAIYPIKVNQQEAVVKSIIATQDVSIGLEAGSKPELMAVLALAPKGCTIVCNGYKDREFIRLALIGERLGHQVFIVIEKESEVDLVIEESRKLEVRPNIGLRVRLSSLASSKWSDTGGEKGKFGLSAGQLISATDKLIAAGLGDCVRLMHFHMGSQIANIADYRLGFREAIRYFAELRALGLPVDHVDVGGGLGVDYDGTHSRNDSSINYDMAEYAHVIVSMLSEFCAENGIPHPRILSESGRAMTAHHAVLLMNVTDVERLPDTVAPIDKAEELSLPLRKLVELANLNDEELVTEIYYRASHCVSEVSEMYAEGRLSLQEKALAEDLHATLCRRLHNQLQASQRSQRQVYDELTDRLADKYFCNFSVFQSLPDTWAIDQVLPIMPVHRLAEQPTRRAVLQDLTCDSDGKLKQYVDQQSIESSMSVHEVKQGDEYLIAVFLVGAYQEILGDMHNLFGDTDSVNVYVREGGELEISGIEEHDTIEDMLRYVHLSPEDLLNRYEAKTRECDLNPEERSLYFAEFCRGLKQSSYLAV</sequence>
<evidence type="ECO:0000255" key="1">
    <source>
        <dbReference type="HAMAP-Rule" id="MF_01417"/>
    </source>
</evidence>
<name>SPEA_CHRVO</name>
<gene>
    <name evidence="1" type="primary">speA</name>
    <name type="ordered locus">CV_2876</name>
</gene>
<keyword id="KW-0210">Decarboxylase</keyword>
<keyword id="KW-0456">Lyase</keyword>
<keyword id="KW-0460">Magnesium</keyword>
<keyword id="KW-0479">Metal-binding</keyword>
<keyword id="KW-0620">Polyamine biosynthesis</keyword>
<keyword id="KW-0661">Putrescine biosynthesis</keyword>
<keyword id="KW-0663">Pyridoxal phosphate</keyword>
<keyword id="KW-1185">Reference proteome</keyword>
<keyword id="KW-0745">Spermidine biosynthesis</keyword>
<organism>
    <name type="scientific">Chromobacterium violaceum (strain ATCC 12472 / DSM 30191 / JCM 1249 / CCUG 213 / NBRC 12614 / NCIMB 9131 / NCTC 9757 / MK)</name>
    <dbReference type="NCBI Taxonomy" id="243365"/>
    <lineage>
        <taxon>Bacteria</taxon>
        <taxon>Pseudomonadati</taxon>
        <taxon>Pseudomonadota</taxon>
        <taxon>Betaproteobacteria</taxon>
        <taxon>Neisseriales</taxon>
        <taxon>Chromobacteriaceae</taxon>
        <taxon>Chromobacterium</taxon>
    </lineage>
</organism>
<protein>
    <recommendedName>
        <fullName evidence="1">Biosynthetic arginine decarboxylase</fullName>
        <shortName evidence="1">ADC</shortName>
        <ecNumber evidence="1">4.1.1.19</ecNumber>
    </recommendedName>
</protein>
<comment type="function">
    <text evidence="1">Catalyzes the biosynthesis of agmatine from arginine.</text>
</comment>
<comment type="catalytic activity">
    <reaction evidence="1">
        <text>L-arginine + H(+) = agmatine + CO2</text>
        <dbReference type="Rhea" id="RHEA:17641"/>
        <dbReference type="ChEBI" id="CHEBI:15378"/>
        <dbReference type="ChEBI" id="CHEBI:16526"/>
        <dbReference type="ChEBI" id="CHEBI:32682"/>
        <dbReference type="ChEBI" id="CHEBI:58145"/>
        <dbReference type="EC" id="4.1.1.19"/>
    </reaction>
</comment>
<comment type="cofactor">
    <cofactor evidence="1">
        <name>Mg(2+)</name>
        <dbReference type="ChEBI" id="CHEBI:18420"/>
    </cofactor>
</comment>
<comment type="cofactor">
    <cofactor evidence="1">
        <name>pyridoxal 5'-phosphate</name>
        <dbReference type="ChEBI" id="CHEBI:597326"/>
    </cofactor>
</comment>
<comment type="pathway">
    <text evidence="1">Amine and polyamine biosynthesis; agmatine biosynthesis; agmatine from L-arginine: step 1/1.</text>
</comment>
<comment type="similarity">
    <text evidence="1">Belongs to the Orn/Lys/Arg decarboxylase class-II family. SpeA subfamily.</text>
</comment>
<dbReference type="EC" id="4.1.1.19" evidence="1"/>
<dbReference type="EMBL" id="AE016825">
    <property type="protein sequence ID" value="AAQ60544.1"/>
    <property type="molecule type" value="Genomic_DNA"/>
</dbReference>
<dbReference type="RefSeq" id="WP_011136423.1">
    <property type="nucleotide sequence ID" value="NC_005085.1"/>
</dbReference>
<dbReference type="SMR" id="Q7NU27"/>
<dbReference type="STRING" id="243365.CV_2876"/>
<dbReference type="KEGG" id="cvi:CV_2876"/>
<dbReference type="eggNOG" id="COG1166">
    <property type="taxonomic scope" value="Bacteria"/>
</dbReference>
<dbReference type="HOGENOM" id="CLU_027243_1_0_4"/>
<dbReference type="OrthoDB" id="9802658at2"/>
<dbReference type="UniPathway" id="UPA00186">
    <property type="reaction ID" value="UER00284"/>
</dbReference>
<dbReference type="Proteomes" id="UP000001424">
    <property type="component" value="Chromosome"/>
</dbReference>
<dbReference type="GO" id="GO:0008792">
    <property type="term" value="F:arginine decarboxylase activity"/>
    <property type="evidence" value="ECO:0007669"/>
    <property type="project" value="UniProtKB-UniRule"/>
</dbReference>
<dbReference type="GO" id="GO:0046872">
    <property type="term" value="F:metal ion binding"/>
    <property type="evidence" value="ECO:0007669"/>
    <property type="project" value="UniProtKB-KW"/>
</dbReference>
<dbReference type="GO" id="GO:0006527">
    <property type="term" value="P:arginine catabolic process"/>
    <property type="evidence" value="ECO:0007669"/>
    <property type="project" value="InterPro"/>
</dbReference>
<dbReference type="GO" id="GO:0033388">
    <property type="term" value="P:putrescine biosynthetic process from arginine"/>
    <property type="evidence" value="ECO:0007669"/>
    <property type="project" value="TreeGrafter"/>
</dbReference>
<dbReference type="GO" id="GO:0008295">
    <property type="term" value="P:spermidine biosynthetic process"/>
    <property type="evidence" value="ECO:0007669"/>
    <property type="project" value="UniProtKB-UniRule"/>
</dbReference>
<dbReference type="CDD" id="cd06830">
    <property type="entry name" value="PLPDE_III_ADC"/>
    <property type="match status" value="1"/>
</dbReference>
<dbReference type="FunFam" id="3.20.20.10:FF:000001">
    <property type="entry name" value="Biosynthetic arginine decarboxylase"/>
    <property type="match status" value="1"/>
</dbReference>
<dbReference type="Gene3D" id="1.10.287.3440">
    <property type="match status" value="1"/>
</dbReference>
<dbReference type="Gene3D" id="1.20.58.930">
    <property type="match status" value="1"/>
</dbReference>
<dbReference type="Gene3D" id="3.20.20.10">
    <property type="entry name" value="Alanine racemase"/>
    <property type="match status" value="1"/>
</dbReference>
<dbReference type="Gene3D" id="2.40.37.10">
    <property type="entry name" value="Lyase, Ornithine Decarboxylase, Chain A, domain 1"/>
    <property type="match status" value="1"/>
</dbReference>
<dbReference type="HAMAP" id="MF_01417">
    <property type="entry name" value="SpeA"/>
    <property type="match status" value="1"/>
</dbReference>
<dbReference type="InterPro" id="IPR009006">
    <property type="entry name" value="Ala_racemase/Decarboxylase_C"/>
</dbReference>
<dbReference type="InterPro" id="IPR040634">
    <property type="entry name" value="Arg_decarb_HB"/>
</dbReference>
<dbReference type="InterPro" id="IPR041128">
    <property type="entry name" value="Arg_decarbox_C"/>
</dbReference>
<dbReference type="InterPro" id="IPR002985">
    <property type="entry name" value="Arg_decrbxlase"/>
</dbReference>
<dbReference type="InterPro" id="IPR022657">
    <property type="entry name" value="De-COase2_CS"/>
</dbReference>
<dbReference type="InterPro" id="IPR022644">
    <property type="entry name" value="De-COase2_N"/>
</dbReference>
<dbReference type="InterPro" id="IPR000183">
    <property type="entry name" value="Orn/DAP/Arg_de-COase"/>
</dbReference>
<dbReference type="InterPro" id="IPR029066">
    <property type="entry name" value="PLP-binding_barrel"/>
</dbReference>
<dbReference type="NCBIfam" id="NF003763">
    <property type="entry name" value="PRK05354.1"/>
    <property type="match status" value="1"/>
</dbReference>
<dbReference type="NCBIfam" id="TIGR01273">
    <property type="entry name" value="speA"/>
    <property type="match status" value="1"/>
</dbReference>
<dbReference type="PANTHER" id="PTHR43295">
    <property type="entry name" value="ARGININE DECARBOXYLASE"/>
    <property type="match status" value="1"/>
</dbReference>
<dbReference type="PANTHER" id="PTHR43295:SF9">
    <property type="entry name" value="BIOSYNTHETIC ARGININE DECARBOXYLASE"/>
    <property type="match status" value="1"/>
</dbReference>
<dbReference type="Pfam" id="PF17810">
    <property type="entry name" value="Arg_decarb_HB"/>
    <property type="match status" value="1"/>
</dbReference>
<dbReference type="Pfam" id="PF17944">
    <property type="entry name" value="Arg_decarbox_C"/>
    <property type="match status" value="1"/>
</dbReference>
<dbReference type="Pfam" id="PF02784">
    <property type="entry name" value="Orn_Arg_deC_N"/>
    <property type="match status" value="1"/>
</dbReference>
<dbReference type="PIRSF" id="PIRSF001336">
    <property type="entry name" value="Arg_decrbxlase"/>
    <property type="match status" value="1"/>
</dbReference>
<dbReference type="PRINTS" id="PR01180">
    <property type="entry name" value="ARGDCRBXLASE"/>
</dbReference>
<dbReference type="PRINTS" id="PR01179">
    <property type="entry name" value="ODADCRBXLASE"/>
</dbReference>
<dbReference type="SUPFAM" id="SSF50621">
    <property type="entry name" value="Alanine racemase C-terminal domain-like"/>
    <property type="match status" value="1"/>
</dbReference>
<dbReference type="SUPFAM" id="SSF51419">
    <property type="entry name" value="PLP-binding barrel"/>
    <property type="match status" value="1"/>
</dbReference>
<dbReference type="PROSITE" id="PS00879">
    <property type="entry name" value="ODR_DC_2_2"/>
    <property type="match status" value="1"/>
</dbReference>
<accession>Q7NU27</accession>
<reference key="1">
    <citation type="journal article" date="2003" name="Proc. Natl. Acad. Sci. U.S.A.">
        <title>The complete genome sequence of Chromobacterium violaceum reveals remarkable and exploitable bacterial adaptability.</title>
        <authorList>
            <person name="Vasconcelos A.T.R."/>
            <person name="de Almeida D.F."/>
            <person name="Hungria M."/>
            <person name="Guimaraes C.T."/>
            <person name="Antonio R.V."/>
            <person name="Almeida F.C."/>
            <person name="de Almeida L.G.P."/>
            <person name="de Almeida R."/>
            <person name="Alves-Gomes J.A."/>
            <person name="Andrade E.M."/>
            <person name="Araripe J."/>
            <person name="de Araujo M.F.F."/>
            <person name="Astolfi-Filho S."/>
            <person name="Azevedo V."/>
            <person name="Baptista A.J."/>
            <person name="Bataus L.A.M."/>
            <person name="Batista J.S."/>
            <person name="Belo A."/>
            <person name="van den Berg C."/>
            <person name="Bogo M."/>
            <person name="Bonatto S."/>
            <person name="Bordignon J."/>
            <person name="Brigido M.M."/>
            <person name="Brito C.A."/>
            <person name="Brocchi M."/>
            <person name="Burity H.A."/>
            <person name="Camargo A.A."/>
            <person name="Cardoso D.D.P."/>
            <person name="Carneiro N.P."/>
            <person name="Carraro D.M."/>
            <person name="Carvalho C.M.B."/>
            <person name="Cascardo J.C.M."/>
            <person name="Cavada B.S."/>
            <person name="Chueire L.M.O."/>
            <person name="Creczynski-Pasa T.B."/>
            <person name="Cunha-Junior N.C."/>
            <person name="Fagundes N."/>
            <person name="Falcao C.L."/>
            <person name="Fantinatti F."/>
            <person name="Farias I.P."/>
            <person name="Felipe M.S.S."/>
            <person name="Ferrari L.P."/>
            <person name="Ferro J.A."/>
            <person name="Ferro M.I.T."/>
            <person name="Franco G.R."/>
            <person name="Freitas N.S.A."/>
            <person name="Furlan L.R."/>
            <person name="Gazzinelli R.T."/>
            <person name="Gomes E.A."/>
            <person name="Goncalves P.R."/>
            <person name="Grangeiro T.B."/>
            <person name="Grattapaglia D."/>
            <person name="Grisard E.C."/>
            <person name="Hanna E.S."/>
            <person name="Jardim S.N."/>
            <person name="Laurino J."/>
            <person name="Leoi L.C.T."/>
            <person name="Lima L.F.A."/>
            <person name="Loureiro M.F."/>
            <person name="Lyra M.C.C.P."/>
            <person name="Madeira H.M.F."/>
            <person name="Manfio G.P."/>
            <person name="Maranhao A.Q."/>
            <person name="Martins W.S."/>
            <person name="di Mauro S.M.Z."/>
            <person name="de Medeiros S.R.B."/>
            <person name="Meissner R.V."/>
            <person name="Moreira M.A.M."/>
            <person name="Nascimento F.F."/>
            <person name="Nicolas M.F."/>
            <person name="Oliveira J.G."/>
            <person name="Oliveira S.C."/>
            <person name="Paixao R.F.C."/>
            <person name="Parente J.A."/>
            <person name="Pedrosa F.O."/>
            <person name="Pena S.D.J."/>
            <person name="Pereira J.O."/>
            <person name="Pereira M."/>
            <person name="Pinto L.S.R.C."/>
            <person name="Pinto L.S."/>
            <person name="Porto J.I.R."/>
            <person name="Potrich D.P."/>
            <person name="Ramalho-Neto C.E."/>
            <person name="Reis A.M.M."/>
            <person name="Rigo L.U."/>
            <person name="Rondinelli E."/>
            <person name="Santos E.B.P."/>
            <person name="Santos F.R."/>
            <person name="Schneider M.P.C."/>
            <person name="Seuanez H.N."/>
            <person name="Silva A.M.R."/>
            <person name="da Silva A.L.C."/>
            <person name="Silva D.W."/>
            <person name="Silva R."/>
            <person name="Simoes I.C."/>
            <person name="Simon D."/>
            <person name="Soares C.M.A."/>
            <person name="Soares R.B.A."/>
            <person name="Souza E.M."/>
            <person name="Souza K.R.L."/>
            <person name="Souza R.C."/>
            <person name="Steffens M.B.R."/>
            <person name="Steindel M."/>
            <person name="Teixeira S.R."/>
            <person name="Urmenyi T."/>
            <person name="Vettore A."/>
            <person name="Wassem R."/>
            <person name="Zaha A."/>
            <person name="Simpson A.J.G."/>
        </authorList>
    </citation>
    <scope>NUCLEOTIDE SEQUENCE [LARGE SCALE GENOMIC DNA]</scope>
    <source>
        <strain>ATCC 12472 / DSM 30191 / JCM 1249 / CCUG 213 / NBRC 12614 / NCIMB 9131 / NCTC 9757 / MK</strain>
    </source>
</reference>
<feature type="chain" id="PRO_0000149958" description="Biosynthetic arginine decarboxylase">
    <location>
        <begin position="1"/>
        <end position="626"/>
    </location>
</feature>
<feature type="binding site" evidence="1">
    <location>
        <begin position="279"/>
        <end position="289"/>
    </location>
    <ligand>
        <name>substrate</name>
    </ligand>
</feature>
<feature type="modified residue" description="N6-(pyridoxal phosphate)lysine" evidence="1">
    <location>
        <position position="99"/>
    </location>
</feature>
<proteinExistence type="inferred from homology"/>